<reference key="1">
    <citation type="journal article" date="2000" name="Science">
        <title>The genome sequence of Drosophila melanogaster.</title>
        <authorList>
            <person name="Adams M.D."/>
            <person name="Celniker S.E."/>
            <person name="Holt R.A."/>
            <person name="Evans C.A."/>
            <person name="Gocayne J.D."/>
            <person name="Amanatides P.G."/>
            <person name="Scherer S.E."/>
            <person name="Li P.W."/>
            <person name="Hoskins R.A."/>
            <person name="Galle R.F."/>
            <person name="George R.A."/>
            <person name="Lewis S.E."/>
            <person name="Richards S."/>
            <person name="Ashburner M."/>
            <person name="Henderson S.N."/>
            <person name="Sutton G.G."/>
            <person name="Wortman J.R."/>
            <person name="Yandell M.D."/>
            <person name="Zhang Q."/>
            <person name="Chen L.X."/>
            <person name="Brandon R.C."/>
            <person name="Rogers Y.-H.C."/>
            <person name="Blazej R.G."/>
            <person name="Champe M."/>
            <person name="Pfeiffer B.D."/>
            <person name="Wan K.H."/>
            <person name="Doyle C."/>
            <person name="Baxter E.G."/>
            <person name="Helt G."/>
            <person name="Nelson C.R."/>
            <person name="Miklos G.L.G."/>
            <person name="Abril J.F."/>
            <person name="Agbayani A."/>
            <person name="An H.-J."/>
            <person name="Andrews-Pfannkoch C."/>
            <person name="Baldwin D."/>
            <person name="Ballew R.M."/>
            <person name="Basu A."/>
            <person name="Baxendale J."/>
            <person name="Bayraktaroglu L."/>
            <person name="Beasley E.M."/>
            <person name="Beeson K.Y."/>
            <person name="Benos P.V."/>
            <person name="Berman B.P."/>
            <person name="Bhandari D."/>
            <person name="Bolshakov S."/>
            <person name="Borkova D."/>
            <person name="Botchan M.R."/>
            <person name="Bouck J."/>
            <person name="Brokstein P."/>
            <person name="Brottier P."/>
            <person name="Burtis K.C."/>
            <person name="Busam D.A."/>
            <person name="Butler H."/>
            <person name="Cadieu E."/>
            <person name="Center A."/>
            <person name="Chandra I."/>
            <person name="Cherry J.M."/>
            <person name="Cawley S."/>
            <person name="Dahlke C."/>
            <person name="Davenport L.B."/>
            <person name="Davies P."/>
            <person name="de Pablos B."/>
            <person name="Delcher A."/>
            <person name="Deng Z."/>
            <person name="Mays A.D."/>
            <person name="Dew I."/>
            <person name="Dietz S.M."/>
            <person name="Dodson K."/>
            <person name="Doup L.E."/>
            <person name="Downes M."/>
            <person name="Dugan-Rocha S."/>
            <person name="Dunkov B.C."/>
            <person name="Dunn P."/>
            <person name="Durbin K.J."/>
            <person name="Evangelista C.C."/>
            <person name="Ferraz C."/>
            <person name="Ferriera S."/>
            <person name="Fleischmann W."/>
            <person name="Fosler C."/>
            <person name="Gabrielian A.E."/>
            <person name="Garg N.S."/>
            <person name="Gelbart W.M."/>
            <person name="Glasser K."/>
            <person name="Glodek A."/>
            <person name="Gong F."/>
            <person name="Gorrell J.H."/>
            <person name="Gu Z."/>
            <person name="Guan P."/>
            <person name="Harris M."/>
            <person name="Harris N.L."/>
            <person name="Harvey D.A."/>
            <person name="Heiman T.J."/>
            <person name="Hernandez J.R."/>
            <person name="Houck J."/>
            <person name="Hostin D."/>
            <person name="Houston K.A."/>
            <person name="Howland T.J."/>
            <person name="Wei M.-H."/>
            <person name="Ibegwam C."/>
            <person name="Jalali M."/>
            <person name="Kalush F."/>
            <person name="Karpen G.H."/>
            <person name="Ke Z."/>
            <person name="Kennison J.A."/>
            <person name="Ketchum K.A."/>
            <person name="Kimmel B.E."/>
            <person name="Kodira C.D."/>
            <person name="Kraft C.L."/>
            <person name="Kravitz S."/>
            <person name="Kulp D."/>
            <person name="Lai Z."/>
            <person name="Lasko P."/>
            <person name="Lei Y."/>
            <person name="Levitsky A.A."/>
            <person name="Li J.H."/>
            <person name="Li Z."/>
            <person name="Liang Y."/>
            <person name="Lin X."/>
            <person name="Liu X."/>
            <person name="Mattei B."/>
            <person name="McIntosh T.C."/>
            <person name="McLeod M.P."/>
            <person name="McPherson D."/>
            <person name="Merkulov G."/>
            <person name="Milshina N.V."/>
            <person name="Mobarry C."/>
            <person name="Morris J."/>
            <person name="Moshrefi A."/>
            <person name="Mount S.M."/>
            <person name="Moy M."/>
            <person name="Murphy B."/>
            <person name="Murphy L."/>
            <person name="Muzny D.M."/>
            <person name="Nelson D.L."/>
            <person name="Nelson D.R."/>
            <person name="Nelson K.A."/>
            <person name="Nixon K."/>
            <person name="Nusskern D.R."/>
            <person name="Pacleb J.M."/>
            <person name="Palazzolo M."/>
            <person name="Pittman G.S."/>
            <person name="Pan S."/>
            <person name="Pollard J."/>
            <person name="Puri V."/>
            <person name="Reese M.G."/>
            <person name="Reinert K."/>
            <person name="Remington K."/>
            <person name="Saunders R.D.C."/>
            <person name="Scheeler F."/>
            <person name="Shen H."/>
            <person name="Shue B.C."/>
            <person name="Siden-Kiamos I."/>
            <person name="Simpson M."/>
            <person name="Skupski M.P."/>
            <person name="Smith T.J."/>
            <person name="Spier E."/>
            <person name="Spradling A.C."/>
            <person name="Stapleton M."/>
            <person name="Strong R."/>
            <person name="Sun E."/>
            <person name="Svirskas R."/>
            <person name="Tector C."/>
            <person name="Turner R."/>
            <person name="Venter E."/>
            <person name="Wang A.H."/>
            <person name="Wang X."/>
            <person name="Wang Z.-Y."/>
            <person name="Wassarman D.A."/>
            <person name="Weinstock G.M."/>
            <person name="Weissenbach J."/>
            <person name="Williams S.M."/>
            <person name="Woodage T."/>
            <person name="Worley K.C."/>
            <person name="Wu D."/>
            <person name="Yang S."/>
            <person name="Yao Q.A."/>
            <person name="Ye J."/>
            <person name="Yeh R.-F."/>
            <person name="Zaveri J.S."/>
            <person name="Zhan M."/>
            <person name="Zhang G."/>
            <person name="Zhao Q."/>
            <person name="Zheng L."/>
            <person name="Zheng X.H."/>
            <person name="Zhong F.N."/>
            <person name="Zhong W."/>
            <person name="Zhou X."/>
            <person name="Zhu S.C."/>
            <person name="Zhu X."/>
            <person name="Smith H.O."/>
            <person name="Gibbs R.A."/>
            <person name="Myers E.W."/>
            <person name="Rubin G.M."/>
            <person name="Venter J.C."/>
        </authorList>
    </citation>
    <scope>NUCLEOTIDE SEQUENCE [LARGE SCALE GENOMIC DNA]</scope>
    <source>
        <strain>Berkeley</strain>
    </source>
</reference>
<reference key="2">
    <citation type="journal article" date="2002" name="Genome Biol.">
        <title>Annotation of the Drosophila melanogaster euchromatic genome: a systematic review.</title>
        <authorList>
            <person name="Misra S."/>
            <person name="Crosby M.A."/>
            <person name="Mungall C.J."/>
            <person name="Matthews B.B."/>
            <person name="Campbell K.S."/>
            <person name="Hradecky P."/>
            <person name="Huang Y."/>
            <person name="Kaminker J.S."/>
            <person name="Millburn G.H."/>
            <person name="Prochnik S.E."/>
            <person name="Smith C.D."/>
            <person name="Tupy J.L."/>
            <person name="Whitfield E.J."/>
            <person name="Bayraktaroglu L."/>
            <person name="Berman B.P."/>
            <person name="Bettencourt B.R."/>
            <person name="Celniker S.E."/>
            <person name="de Grey A.D.N.J."/>
            <person name="Drysdale R.A."/>
            <person name="Harris N.L."/>
            <person name="Richter J."/>
            <person name="Russo S."/>
            <person name="Schroeder A.J."/>
            <person name="Shu S.Q."/>
            <person name="Stapleton M."/>
            <person name="Yamada C."/>
            <person name="Ashburner M."/>
            <person name="Gelbart W.M."/>
            <person name="Rubin G.M."/>
            <person name="Lewis S.E."/>
        </authorList>
    </citation>
    <scope>GENOME REANNOTATION</scope>
    <source>
        <strain>Berkeley</strain>
    </source>
</reference>
<reference key="3">
    <citation type="journal article" date="2002" name="Genome Biol.">
        <title>A Drosophila full-length cDNA resource.</title>
        <authorList>
            <person name="Stapleton M."/>
            <person name="Carlson J.W."/>
            <person name="Brokstein P."/>
            <person name="Yu C."/>
            <person name="Champe M."/>
            <person name="George R.A."/>
            <person name="Guarin H."/>
            <person name="Kronmiller B."/>
            <person name="Pacleb J.M."/>
            <person name="Park S."/>
            <person name="Wan K.H."/>
            <person name="Rubin G.M."/>
            <person name="Celniker S.E."/>
        </authorList>
    </citation>
    <scope>NUCLEOTIDE SEQUENCE [LARGE SCALE MRNA]</scope>
    <source>
        <strain>Berkeley</strain>
        <tissue>Head</tissue>
    </source>
</reference>
<reference key="4">
    <citation type="submission" date="2008-09" db="EMBL/GenBank/DDBJ databases">
        <authorList>
            <person name="Carlson J.W."/>
            <person name="Booth B."/>
            <person name="Frise E."/>
            <person name="Park S."/>
            <person name="Wan K.H."/>
            <person name="Yu C."/>
            <person name="Celniker S.E."/>
        </authorList>
    </citation>
    <scope>NUCLEOTIDE SEQUENCE [LARGE SCALE MRNA]</scope>
    <source>
        <strain>Berkeley</strain>
    </source>
</reference>
<reference key="5">
    <citation type="journal article" date="2007" name="J. Biol. Chem.">
        <title>The essential Drosophila ATP-binding cassette domain protein, pixie, binds the 40 S ribosome in an ATP-dependent manner and is required for translation initiation.</title>
        <authorList>
            <person name="Andersen D.S."/>
            <person name="Leevers S.J."/>
        </authorList>
    </citation>
    <scope>INTERACTION WITH PIX</scope>
    <scope>ASSOCIATION WITH THE 40S RIBOSOME</scope>
</reference>
<reference key="6">
    <citation type="journal article" date="2007" name="Mol. Biosyst.">
        <title>An integrated chemical, mass spectrometric and computational strategy for (quantitative) phosphoproteomics: application to Drosophila melanogaster Kc167 cells.</title>
        <authorList>
            <person name="Bodenmiller B."/>
            <person name="Mueller L.N."/>
            <person name="Pedrioli P.G.A."/>
            <person name="Pflieger D."/>
            <person name="Juenger M.A."/>
            <person name="Eng J.K."/>
            <person name="Aebersold R."/>
            <person name="Tao W.A."/>
        </authorList>
    </citation>
    <scope>PHOSPHORYLATION [LARGE SCALE ANALYSIS] AT SER-34</scope>
    <scope>IDENTIFICATION BY MASS SPECTROMETRY</scope>
</reference>
<reference key="7">
    <citation type="journal article" date="2008" name="J. Proteome Res.">
        <title>Phosphoproteome analysis of Drosophila melanogaster embryos.</title>
        <authorList>
            <person name="Zhai B."/>
            <person name="Villen J."/>
            <person name="Beausoleil S.A."/>
            <person name="Mintseris J."/>
            <person name="Gygi S.P."/>
        </authorList>
    </citation>
    <scope>PHOSPHORYLATION [LARGE SCALE ANALYSIS] AT SER-165; SER-176 AND SER-185</scope>
    <scope>IDENTIFICATION BY MASS SPECTROMETRY</scope>
    <source>
        <tissue>Embryo</tissue>
    </source>
</reference>
<gene>
    <name evidence="1" type="primary">eIF3c</name>
    <name evidence="1" type="synonym">eIF3-S8</name>
    <name evidence="8" type="ORF">CG4954</name>
</gene>
<dbReference type="EMBL" id="AE013599">
    <property type="protein sequence ID" value="AAF57818.1"/>
    <property type="molecule type" value="Genomic_DNA"/>
</dbReference>
<dbReference type="EMBL" id="AY122125">
    <property type="protein sequence ID" value="AAM52637.1"/>
    <property type="molecule type" value="mRNA"/>
</dbReference>
<dbReference type="EMBL" id="BT044242">
    <property type="protein sequence ID" value="ACH92307.1"/>
    <property type="molecule type" value="mRNA"/>
</dbReference>
<dbReference type="RefSeq" id="NP_001286545.1">
    <property type="nucleotide sequence ID" value="NM_001299616.1"/>
</dbReference>
<dbReference type="RefSeq" id="NP_611242.1">
    <property type="nucleotide sequence ID" value="NM_137398.2"/>
</dbReference>
<dbReference type="SMR" id="A1ZAX1"/>
<dbReference type="BioGRID" id="62691">
    <property type="interactions" value="31"/>
</dbReference>
<dbReference type="FunCoup" id="A1ZAX1">
    <property type="interactions" value="1999"/>
</dbReference>
<dbReference type="IntAct" id="A1ZAX1">
    <property type="interactions" value="23"/>
</dbReference>
<dbReference type="STRING" id="7227.FBpp0309235"/>
<dbReference type="GlyGen" id="A1ZAX1">
    <property type="glycosylation" value="1 site"/>
</dbReference>
<dbReference type="iPTMnet" id="A1ZAX1"/>
<dbReference type="PaxDb" id="7227-FBpp0086013"/>
<dbReference type="DNASU" id="37005"/>
<dbReference type="EnsemblMetazoa" id="FBtr0086836">
    <property type="protein sequence ID" value="FBpp0086013"/>
    <property type="gene ID" value="FBgn0034258"/>
</dbReference>
<dbReference type="EnsemblMetazoa" id="FBtr0340269">
    <property type="protein sequence ID" value="FBpp0309235"/>
    <property type="gene ID" value="FBgn0034258"/>
</dbReference>
<dbReference type="GeneID" id="37005"/>
<dbReference type="KEGG" id="dme:Dmel_CG4954"/>
<dbReference type="UCSC" id="CG4954-RA">
    <property type="organism name" value="d. melanogaster"/>
</dbReference>
<dbReference type="AGR" id="FB:FBgn0034258"/>
<dbReference type="CTD" id="8663"/>
<dbReference type="FlyBase" id="FBgn0034258">
    <property type="gene designation" value="eIF3c"/>
</dbReference>
<dbReference type="VEuPathDB" id="VectorBase:FBgn0034258"/>
<dbReference type="eggNOG" id="KOG1076">
    <property type="taxonomic scope" value="Eukaryota"/>
</dbReference>
<dbReference type="GeneTree" id="ENSGT00390000017900"/>
<dbReference type="HOGENOM" id="CLU_004304_0_0_1"/>
<dbReference type="InParanoid" id="A1ZAX1"/>
<dbReference type="OMA" id="FRCGLIK"/>
<dbReference type="OrthoDB" id="29647at2759"/>
<dbReference type="PhylomeDB" id="A1ZAX1"/>
<dbReference type="Reactome" id="R-DME-156827">
    <property type="pathway name" value="L13a-mediated translational silencing of Ceruloplasmin expression"/>
</dbReference>
<dbReference type="Reactome" id="R-DME-72649">
    <property type="pathway name" value="Translation initiation complex formation"/>
</dbReference>
<dbReference type="Reactome" id="R-DME-72689">
    <property type="pathway name" value="Formation of a pool of free 40S subunits"/>
</dbReference>
<dbReference type="Reactome" id="R-DME-72695">
    <property type="pathway name" value="Formation of the ternary complex, and subsequently, the 43S complex"/>
</dbReference>
<dbReference type="Reactome" id="R-DME-72702">
    <property type="pathway name" value="Ribosomal scanning and start codon recognition"/>
</dbReference>
<dbReference type="SignaLink" id="A1ZAX1"/>
<dbReference type="BioGRID-ORCS" id="37005">
    <property type="hits" value="0 hits in 3 CRISPR screens"/>
</dbReference>
<dbReference type="ChiTaRS" id="eIF3-S8">
    <property type="organism name" value="fly"/>
</dbReference>
<dbReference type="GenomeRNAi" id="37005"/>
<dbReference type="PRO" id="PR:A1ZAX1"/>
<dbReference type="Proteomes" id="UP000000803">
    <property type="component" value="Chromosome 2R"/>
</dbReference>
<dbReference type="Bgee" id="FBgn0034258">
    <property type="expression patterns" value="Expressed in adult enteroendocrine precursor cell in adult midgut (Drosophila) and 247 other cell types or tissues"/>
</dbReference>
<dbReference type="ExpressionAtlas" id="A1ZAX1">
    <property type="expression patterns" value="baseline and differential"/>
</dbReference>
<dbReference type="GO" id="GO:0005829">
    <property type="term" value="C:cytosol"/>
    <property type="evidence" value="ECO:0000250"/>
    <property type="project" value="FlyBase"/>
</dbReference>
<dbReference type="GO" id="GO:0016282">
    <property type="term" value="C:eukaryotic 43S preinitiation complex"/>
    <property type="evidence" value="ECO:0007669"/>
    <property type="project" value="UniProtKB-UniRule"/>
</dbReference>
<dbReference type="GO" id="GO:0033290">
    <property type="term" value="C:eukaryotic 48S preinitiation complex"/>
    <property type="evidence" value="ECO:0007669"/>
    <property type="project" value="UniProtKB-UniRule"/>
</dbReference>
<dbReference type="GO" id="GO:0005852">
    <property type="term" value="C:eukaryotic translation initiation factor 3 complex"/>
    <property type="evidence" value="ECO:0000250"/>
    <property type="project" value="FlyBase"/>
</dbReference>
<dbReference type="GO" id="GO:0003723">
    <property type="term" value="F:RNA binding"/>
    <property type="evidence" value="ECO:0007669"/>
    <property type="project" value="InterPro"/>
</dbReference>
<dbReference type="GO" id="GO:0003743">
    <property type="term" value="F:translation initiation factor activity"/>
    <property type="evidence" value="ECO:0000250"/>
    <property type="project" value="FlyBase"/>
</dbReference>
<dbReference type="GO" id="GO:0031369">
    <property type="term" value="F:translation initiation factor binding"/>
    <property type="evidence" value="ECO:0000318"/>
    <property type="project" value="GO_Central"/>
</dbReference>
<dbReference type="GO" id="GO:0001732">
    <property type="term" value="P:formation of cytoplasmic translation initiation complex"/>
    <property type="evidence" value="ECO:0007669"/>
    <property type="project" value="UniProtKB-UniRule"/>
</dbReference>
<dbReference type="GO" id="GO:0006413">
    <property type="term" value="P:translational initiation"/>
    <property type="evidence" value="ECO:0000250"/>
    <property type="project" value="FlyBase"/>
</dbReference>
<dbReference type="HAMAP" id="MF_03002">
    <property type="entry name" value="eIF3c"/>
    <property type="match status" value="1"/>
</dbReference>
<dbReference type="InterPro" id="IPR027516">
    <property type="entry name" value="EIF3C"/>
</dbReference>
<dbReference type="InterPro" id="IPR008905">
    <property type="entry name" value="EIF3C_N_dom"/>
</dbReference>
<dbReference type="InterPro" id="IPR000717">
    <property type="entry name" value="PCI_dom"/>
</dbReference>
<dbReference type="InterPro" id="IPR036390">
    <property type="entry name" value="WH_DNA-bd_sf"/>
</dbReference>
<dbReference type="PANTHER" id="PTHR13937">
    <property type="entry name" value="EUKARYOTIC TRANSLATION INITATION FACTOR 3, SUBUNIT 8 EIF3S8 -RELATED"/>
    <property type="match status" value="1"/>
</dbReference>
<dbReference type="PANTHER" id="PTHR13937:SF0">
    <property type="entry name" value="EUKARYOTIC TRANSLATION INITIATION FACTOR 3 SUBUNIT C-RELATED"/>
    <property type="match status" value="1"/>
</dbReference>
<dbReference type="Pfam" id="PF05470">
    <property type="entry name" value="eIF-3c_N"/>
    <property type="match status" value="1"/>
</dbReference>
<dbReference type="Pfam" id="PF01399">
    <property type="entry name" value="PCI"/>
    <property type="match status" value="1"/>
</dbReference>
<dbReference type="SMART" id="SM00088">
    <property type="entry name" value="PINT"/>
    <property type="match status" value="1"/>
</dbReference>
<dbReference type="SUPFAM" id="SSF46785">
    <property type="entry name" value="Winged helix' DNA-binding domain"/>
    <property type="match status" value="1"/>
</dbReference>
<dbReference type="PROSITE" id="PS50250">
    <property type="entry name" value="PCI"/>
    <property type="match status" value="1"/>
</dbReference>
<organism>
    <name type="scientific">Drosophila melanogaster</name>
    <name type="common">Fruit fly</name>
    <dbReference type="NCBI Taxonomy" id="7227"/>
    <lineage>
        <taxon>Eukaryota</taxon>
        <taxon>Metazoa</taxon>
        <taxon>Ecdysozoa</taxon>
        <taxon>Arthropoda</taxon>
        <taxon>Hexapoda</taxon>
        <taxon>Insecta</taxon>
        <taxon>Pterygota</taxon>
        <taxon>Neoptera</taxon>
        <taxon>Endopterygota</taxon>
        <taxon>Diptera</taxon>
        <taxon>Brachycera</taxon>
        <taxon>Muscomorpha</taxon>
        <taxon>Ephydroidea</taxon>
        <taxon>Drosophilidae</taxon>
        <taxon>Drosophila</taxon>
        <taxon>Sophophora</taxon>
    </lineage>
</organism>
<proteinExistence type="evidence at protein level"/>
<sequence>MSRFFANGSESESESSEEEIQATNFNKASAFQFSDDEEEVKRVVRSTKEKRYENLTSIIKTIRNHKKIKDIPNTLSSFEDLTRAYQKALPVISKEENGITPRFYIRCLAELEDFINEVWEDREGRKNLSKNNSKSLGTLRQKVRKYIKDFEDDLSRFREAPDQESEAEDEVVALESDGGDAGDDSDAGVKPTEAVPKAVKSAPAKAAPADDDDSDDSIDWDSDSESETESSDDENQYQNMRERFLKRTTEKEEKDDDKRKDKRKEQKTKIRKRAEDDEDGEWETVVKGHVVEKPKMFEKDAEIDVPLVLAKLLEIMSARGKKRTDRRLQIDLLFELRDISDQHNLGTAVSVKIHFNIISAIYDYNQKISEPMKLEHWALLLEVMQSMMKLLLANADIIMSESVAEEHEEYATSPFYVRGCPLAAVERLDDEFVKLLKECDPHSNDYVSRLKDEVNVVKTIELVLQYFERSGTNNERCRIYLRKIEHLYYKFDPEVLKKKRGELPATTSTSVDVMDKLCKFIYAKDDTDRIRTRAILAHIYHHAMHDNWFQARDLVLMSHLQDNIDAADPATRILYNRMMANLGLCAFRQGNVKDAHHCLVDLMVTGKPKELLAQGLLPQRQHERSAEQEKIEKQRQMPFHMHINLELLECVYLVSAMLLEIPYIAAHEFDARRRMISKTFYQQLRSSERQSLVGPPESMREHVVAAAKAMRCGNWQACANFIVNKKMNTKVWDLFYESDRVREMLTKFIKEESLRTYLFTYSNVYTSISIPSLAQMYELPVPKVHSIISKMIINEELMASLDDPSETVGMHRSEPSRLQALAMQFVDKVTNLVDVNEKVFDMKQGNFFQRGNMGNRGDRGYNRNQNNQGGNWLGQRRDRNNRNRNQRGHHKNNQDRQQQQQQQVQTIDEE</sequence>
<feature type="chain" id="PRO_0000365388" description="Eukaryotic translation initiation factor 3 subunit C">
    <location>
        <begin position="1"/>
        <end position="910"/>
    </location>
</feature>
<feature type="domain" description="PCI" evidence="2">
    <location>
        <begin position="639"/>
        <end position="815"/>
    </location>
</feature>
<feature type="region of interest" description="Disordered" evidence="3">
    <location>
        <begin position="1"/>
        <end position="21"/>
    </location>
</feature>
<feature type="region of interest" description="Disordered" evidence="3">
    <location>
        <begin position="157"/>
        <end position="279"/>
    </location>
</feature>
<feature type="region of interest" description="Disordered" evidence="3">
    <location>
        <begin position="847"/>
        <end position="910"/>
    </location>
</feature>
<feature type="compositionally biased region" description="Acidic residues" evidence="3">
    <location>
        <begin position="11"/>
        <end position="20"/>
    </location>
</feature>
<feature type="compositionally biased region" description="Acidic residues" evidence="3">
    <location>
        <begin position="162"/>
        <end position="186"/>
    </location>
</feature>
<feature type="compositionally biased region" description="Low complexity" evidence="3">
    <location>
        <begin position="194"/>
        <end position="207"/>
    </location>
</feature>
<feature type="compositionally biased region" description="Acidic residues" evidence="3">
    <location>
        <begin position="209"/>
        <end position="235"/>
    </location>
</feature>
<feature type="compositionally biased region" description="Basic and acidic residues" evidence="3">
    <location>
        <begin position="240"/>
        <end position="268"/>
    </location>
</feature>
<feature type="compositionally biased region" description="Low complexity" evidence="3">
    <location>
        <begin position="862"/>
        <end position="874"/>
    </location>
</feature>
<feature type="compositionally biased region" description="Basic residues" evidence="3">
    <location>
        <begin position="882"/>
        <end position="891"/>
    </location>
</feature>
<feature type="compositionally biased region" description="Low complexity" evidence="3">
    <location>
        <begin position="895"/>
        <end position="910"/>
    </location>
</feature>
<feature type="modified residue" description="Phosphoserine" evidence="1 4">
    <location>
        <position position="34"/>
    </location>
</feature>
<feature type="modified residue" description="Phosphoserine" evidence="1 6">
    <location>
        <position position="165"/>
    </location>
</feature>
<feature type="modified residue" description="Phosphoserine" evidence="1 6">
    <location>
        <position position="176"/>
    </location>
</feature>
<feature type="modified residue" description="Phosphoserine" evidence="1 6">
    <location>
        <position position="185"/>
    </location>
</feature>
<feature type="sequence conflict" description="In Ref. 3; AAM52637." evidence="7" ref="3">
    <original>K</original>
    <variation>N</variation>
    <location>
        <position position="293"/>
    </location>
</feature>
<evidence type="ECO:0000255" key="1">
    <source>
        <dbReference type="HAMAP-Rule" id="MF_03002"/>
    </source>
</evidence>
<evidence type="ECO:0000255" key="2">
    <source>
        <dbReference type="PROSITE-ProRule" id="PRU01185"/>
    </source>
</evidence>
<evidence type="ECO:0000256" key="3">
    <source>
        <dbReference type="SAM" id="MobiDB-lite"/>
    </source>
</evidence>
<evidence type="ECO:0000269" key="4">
    <source>
    </source>
</evidence>
<evidence type="ECO:0000269" key="5">
    <source>
    </source>
</evidence>
<evidence type="ECO:0000269" key="6">
    <source>
    </source>
</evidence>
<evidence type="ECO:0000305" key="7"/>
<evidence type="ECO:0000312" key="8">
    <source>
        <dbReference type="FlyBase" id="FBgn0034258"/>
    </source>
</evidence>
<name>EIF3C_DROME</name>
<accession>A1ZAX1</accession>
<accession>Q8MR49</accession>
<protein>
    <recommendedName>
        <fullName evidence="1">Eukaryotic translation initiation factor 3 subunit C</fullName>
        <shortName evidence="1">eIF3c</shortName>
    </recommendedName>
    <alternativeName>
        <fullName evidence="1">Eukaryotic translation initiation factor 3 subunit 8</fullName>
    </alternativeName>
</protein>
<keyword id="KW-0963">Cytoplasm</keyword>
<keyword id="KW-0396">Initiation factor</keyword>
<keyword id="KW-0597">Phosphoprotein</keyword>
<keyword id="KW-0648">Protein biosynthesis</keyword>
<keyword id="KW-1185">Reference proteome</keyword>
<comment type="function">
    <text evidence="1">Component of the eukaryotic translation initiation factor 3 (eIF-3) complex, which is involved in protein synthesis of a specialized repertoire of mRNAs and, together with other initiation factors, stimulates binding of mRNA and methionyl-tRNAi to the 40S ribosome. The eIF-3 complex specifically targets and initiates translation of a subset of mRNAs involved in cell proliferation.</text>
</comment>
<comment type="subunit">
    <text evidence="1 5">Component of the eukaryotic translation initiation factor 3 (eIF-3) complex. The eIF-3 complex interacts with pix.</text>
</comment>
<comment type="subcellular location">
    <subcellularLocation>
        <location evidence="1">Cytoplasm</location>
    </subcellularLocation>
</comment>
<comment type="similarity">
    <text evidence="1">Belongs to the eIF-3 subunit C family.</text>
</comment>